<gene>
    <name evidence="1" type="primary">atpI</name>
</gene>
<geneLocation type="chloroplast"/>
<proteinExistence type="inferred from homology"/>
<feature type="chain" id="PRO_0000002593" description="ATP synthase subunit a, chloroplastic">
    <location>
        <begin position="1"/>
        <end position="247"/>
    </location>
</feature>
<feature type="transmembrane region" description="Helical" evidence="1">
    <location>
        <begin position="38"/>
        <end position="58"/>
    </location>
</feature>
<feature type="transmembrane region" description="Helical" evidence="1">
    <location>
        <begin position="95"/>
        <end position="115"/>
    </location>
</feature>
<feature type="transmembrane region" description="Helical" evidence="1">
    <location>
        <begin position="134"/>
        <end position="154"/>
    </location>
</feature>
<feature type="transmembrane region" description="Helical" evidence="1">
    <location>
        <begin position="199"/>
        <end position="219"/>
    </location>
</feature>
<feature type="transmembrane region" description="Helical" evidence="1">
    <location>
        <begin position="220"/>
        <end position="240"/>
    </location>
</feature>
<comment type="function">
    <text evidence="1">Key component of the proton channel; it plays a direct role in the translocation of protons across the membrane.</text>
</comment>
<comment type="subunit">
    <text evidence="1">F-type ATPases have 2 components, CF(1) - the catalytic core - and CF(0) - the membrane proton channel. CF(1) has five subunits: alpha(3), beta(3), gamma(1), delta(1), epsilon(1). CF(0) has four main subunits: a, b, b' and c.</text>
</comment>
<comment type="subcellular location">
    <subcellularLocation>
        <location evidence="1">Plastid</location>
        <location evidence="1">Chloroplast thylakoid membrane</location>
        <topology evidence="1">Multi-pass membrane protein</topology>
    </subcellularLocation>
</comment>
<comment type="similarity">
    <text evidence="1">Belongs to the ATPase A chain family.</text>
</comment>
<accession>Q9MTM0</accession>
<organism>
    <name type="scientific">Oenothera elata subsp. hookeri</name>
    <name type="common">Hooker's evening primrose</name>
    <name type="synonym">Oenothera hookeri</name>
    <dbReference type="NCBI Taxonomy" id="85636"/>
    <lineage>
        <taxon>Eukaryota</taxon>
        <taxon>Viridiplantae</taxon>
        <taxon>Streptophyta</taxon>
        <taxon>Embryophyta</taxon>
        <taxon>Tracheophyta</taxon>
        <taxon>Spermatophyta</taxon>
        <taxon>Magnoliopsida</taxon>
        <taxon>eudicotyledons</taxon>
        <taxon>Gunneridae</taxon>
        <taxon>Pentapetalae</taxon>
        <taxon>rosids</taxon>
        <taxon>malvids</taxon>
        <taxon>Myrtales</taxon>
        <taxon>Onagraceae</taxon>
        <taxon>Onagroideae</taxon>
        <taxon>Onagreae</taxon>
        <taxon>Oenothera</taxon>
    </lineage>
</organism>
<sequence>MDVLSCSNNTLKGLYDISGVEVGQHFYWQIGGFQVHGQVLITSWVVIAILLGSASIAVRNPQTIPNDSQNFFEYILEFIRDVSKTQIGEEYGPWVPFIGTMFLFIFVSNWSGALLPWKLVELPHGELAAPTNDINTTVALALLTSVAYFYAGLSKKGLGYFSKYIQPTPILLPINILEDFTKPLSLSFRLFGNILADELVVVVLVSLVPSVVPIPVMFLGLFTSGIQALIFATLAAAYIGESMEGHH</sequence>
<name>ATPI_OENEH</name>
<dbReference type="EMBL" id="AJ271079">
    <property type="protein sequence ID" value="CAB67156.2"/>
    <property type="molecule type" value="Genomic_DNA"/>
</dbReference>
<dbReference type="RefSeq" id="NP_084691.2">
    <property type="nucleotide sequence ID" value="NC_002693.2"/>
</dbReference>
<dbReference type="SMR" id="Q9MTM0"/>
<dbReference type="GeneID" id="802729"/>
<dbReference type="GO" id="GO:0009535">
    <property type="term" value="C:chloroplast thylakoid membrane"/>
    <property type="evidence" value="ECO:0007669"/>
    <property type="project" value="UniProtKB-SubCell"/>
</dbReference>
<dbReference type="GO" id="GO:0005886">
    <property type="term" value="C:plasma membrane"/>
    <property type="evidence" value="ECO:0007669"/>
    <property type="project" value="UniProtKB-UniRule"/>
</dbReference>
<dbReference type="GO" id="GO:0045259">
    <property type="term" value="C:proton-transporting ATP synthase complex"/>
    <property type="evidence" value="ECO:0007669"/>
    <property type="project" value="UniProtKB-KW"/>
</dbReference>
<dbReference type="GO" id="GO:0046933">
    <property type="term" value="F:proton-transporting ATP synthase activity, rotational mechanism"/>
    <property type="evidence" value="ECO:0007669"/>
    <property type="project" value="UniProtKB-UniRule"/>
</dbReference>
<dbReference type="CDD" id="cd00310">
    <property type="entry name" value="ATP-synt_Fo_a_6"/>
    <property type="match status" value="1"/>
</dbReference>
<dbReference type="FunFam" id="1.20.120.220:FF:000001">
    <property type="entry name" value="ATP synthase subunit a, chloroplastic"/>
    <property type="match status" value="1"/>
</dbReference>
<dbReference type="Gene3D" id="1.20.120.220">
    <property type="entry name" value="ATP synthase, F0 complex, subunit A"/>
    <property type="match status" value="1"/>
</dbReference>
<dbReference type="HAMAP" id="MF_01393">
    <property type="entry name" value="ATP_synth_a_bact"/>
    <property type="match status" value="1"/>
</dbReference>
<dbReference type="InterPro" id="IPR045082">
    <property type="entry name" value="ATP_syn_F0_a_bact/chloroplast"/>
</dbReference>
<dbReference type="InterPro" id="IPR000568">
    <property type="entry name" value="ATP_synth_F0_asu"/>
</dbReference>
<dbReference type="InterPro" id="IPR023011">
    <property type="entry name" value="ATP_synth_F0_asu_AS"/>
</dbReference>
<dbReference type="InterPro" id="IPR035908">
    <property type="entry name" value="F0_ATP_A_sf"/>
</dbReference>
<dbReference type="NCBIfam" id="TIGR01131">
    <property type="entry name" value="ATP_synt_6_or_A"/>
    <property type="match status" value="1"/>
</dbReference>
<dbReference type="PANTHER" id="PTHR42823">
    <property type="entry name" value="ATP SYNTHASE SUBUNIT A, CHLOROPLASTIC"/>
    <property type="match status" value="1"/>
</dbReference>
<dbReference type="PANTHER" id="PTHR42823:SF3">
    <property type="entry name" value="ATP SYNTHASE SUBUNIT A, CHLOROPLASTIC"/>
    <property type="match status" value="1"/>
</dbReference>
<dbReference type="Pfam" id="PF00119">
    <property type="entry name" value="ATP-synt_A"/>
    <property type="match status" value="1"/>
</dbReference>
<dbReference type="PRINTS" id="PR00123">
    <property type="entry name" value="ATPASEA"/>
</dbReference>
<dbReference type="SUPFAM" id="SSF81336">
    <property type="entry name" value="F1F0 ATP synthase subunit A"/>
    <property type="match status" value="1"/>
</dbReference>
<dbReference type="PROSITE" id="PS00449">
    <property type="entry name" value="ATPASE_A"/>
    <property type="match status" value="1"/>
</dbReference>
<keyword id="KW-0066">ATP synthesis</keyword>
<keyword id="KW-0138">CF(0)</keyword>
<keyword id="KW-0150">Chloroplast</keyword>
<keyword id="KW-0375">Hydrogen ion transport</keyword>
<keyword id="KW-0406">Ion transport</keyword>
<keyword id="KW-0472">Membrane</keyword>
<keyword id="KW-0934">Plastid</keyword>
<keyword id="KW-0793">Thylakoid</keyword>
<keyword id="KW-0812">Transmembrane</keyword>
<keyword id="KW-1133">Transmembrane helix</keyword>
<keyword id="KW-0813">Transport</keyword>
<protein>
    <recommendedName>
        <fullName evidence="1">ATP synthase subunit a, chloroplastic</fullName>
    </recommendedName>
    <alternativeName>
        <fullName evidence="1">ATP synthase F0 sector subunit a</fullName>
    </alternativeName>
    <alternativeName>
        <fullName evidence="1">F-ATPase subunit IV</fullName>
    </alternativeName>
</protein>
<reference key="1">
    <citation type="journal article" date="2000" name="Mol. Gen. Genet.">
        <title>Complete nucleotide sequence of the Oenothera elata plastid chromosome, representing plastome I of the five distinguishable Euoenothera plastomes.</title>
        <authorList>
            <person name="Hupfer H."/>
            <person name="Swiatek M."/>
            <person name="Hornung S."/>
            <person name="Herrmann R.G."/>
            <person name="Maier R.M."/>
            <person name="Chiu W.-L."/>
            <person name="Sears B."/>
        </authorList>
    </citation>
    <scope>NUCLEOTIDE SEQUENCE [LARGE SCALE GENOMIC DNA]</scope>
    <source>
        <strain>cv. Johansen</strain>
    </source>
</reference>
<reference key="2">
    <citation type="journal article" date="2008" name="Nucleic Acids Res.">
        <title>The complete nucleotide sequences of the five genetically distinct plastid genomes of Oenothera, subsection Oenothera: I. Sequence evaluation and plastome evolution.</title>
        <authorList>
            <person name="Greiner S."/>
            <person name="Wang X."/>
            <person name="Rauwolf U."/>
            <person name="Silber M.V."/>
            <person name="Mayer K."/>
            <person name="Meurer J."/>
            <person name="Haberer G."/>
            <person name="Herrmann R.G."/>
        </authorList>
    </citation>
    <scope>SEQUENCE REVISION TO 234</scope>
</reference>
<evidence type="ECO:0000255" key="1">
    <source>
        <dbReference type="HAMAP-Rule" id="MF_01393"/>
    </source>
</evidence>